<reference key="1">
    <citation type="journal article" date="2005" name="J. Bacteriol.">
        <title>Completion of the genome sequence of Brucella abortus and comparison to the highly similar genomes of Brucella melitensis and Brucella suis.</title>
        <authorList>
            <person name="Halling S.M."/>
            <person name="Peterson-Burch B.D."/>
            <person name="Bricker B.J."/>
            <person name="Zuerner R.L."/>
            <person name="Qing Z."/>
            <person name="Li L.-L."/>
            <person name="Kapur V."/>
            <person name="Alt D.P."/>
            <person name="Olsen S.C."/>
        </authorList>
    </citation>
    <scope>NUCLEOTIDE SEQUENCE [LARGE SCALE GENOMIC DNA]</scope>
    <source>
        <strain>9-941</strain>
    </source>
</reference>
<feature type="chain" id="PRO_0000229811" description="Phosphoribosyl-AMP cyclohydrolase">
    <location>
        <begin position="1"/>
        <end position="139"/>
    </location>
</feature>
<feature type="binding site" evidence="1">
    <location>
        <position position="91"/>
    </location>
    <ligand>
        <name>Mg(2+)</name>
        <dbReference type="ChEBI" id="CHEBI:18420"/>
    </ligand>
</feature>
<feature type="binding site" evidence="1">
    <location>
        <position position="92"/>
    </location>
    <ligand>
        <name>Zn(2+)</name>
        <dbReference type="ChEBI" id="CHEBI:29105"/>
        <note>ligand shared between dimeric partners</note>
    </ligand>
</feature>
<feature type="binding site" evidence="1">
    <location>
        <position position="93"/>
    </location>
    <ligand>
        <name>Mg(2+)</name>
        <dbReference type="ChEBI" id="CHEBI:18420"/>
    </ligand>
</feature>
<feature type="binding site" evidence="1">
    <location>
        <position position="95"/>
    </location>
    <ligand>
        <name>Mg(2+)</name>
        <dbReference type="ChEBI" id="CHEBI:18420"/>
    </ligand>
</feature>
<feature type="binding site" evidence="1">
    <location>
        <position position="110"/>
    </location>
    <ligand>
        <name>Zn(2+)</name>
        <dbReference type="ChEBI" id="CHEBI:29105"/>
        <note>ligand shared between dimeric partners</note>
    </ligand>
</feature>
<feature type="binding site" evidence="1">
    <location>
        <position position="117"/>
    </location>
    <ligand>
        <name>Zn(2+)</name>
        <dbReference type="ChEBI" id="CHEBI:29105"/>
        <note>ligand shared between dimeric partners</note>
    </ligand>
</feature>
<proteinExistence type="inferred from homology"/>
<sequence>MSIFPAQPSDKKAVEEGAAFMPRFDASGLITAIVTDARDGELLMVAHMNEEALRLTLETGIAHYWSRSRKTLWKKGETSGNLQSVVELRTDCDQDALWLKVHVAGDGPTCHTGRRSCFYRQVVSSGGKVALTMASDHDQ</sequence>
<evidence type="ECO:0000255" key="1">
    <source>
        <dbReference type="HAMAP-Rule" id="MF_01021"/>
    </source>
</evidence>
<protein>
    <recommendedName>
        <fullName evidence="1">Phosphoribosyl-AMP cyclohydrolase</fullName>
        <shortName evidence="1">PRA-CH</shortName>
        <ecNumber evidence="1">3.5.4.19</ecNumber>
    </recommendedName>
</protein>
<keyword id="KW-0028">Amino-acid biosynthesis</keyword>
<keyword id="KW-0963">Cytoplasm</keyword>
<keyword id="KW-0368">Histidine biosynthesis</keyword>
<keyword id="KW-0378">Hydrolase</keyword>
<keyword id="KW-0460">Magnesium</keyword>
<keyword id="KW-0479">Metal-binding</keyword>
<keyword id="KW-0862">Zinc</keyword>
<gene>
    <name evidence="1" type="primary">hisI</name>
    <name type="ordered locus">BruAb1_1081</name>
</gene>
<organism>
    <name type="scientific">Brucella abortus biovar 1 (strain 9-941)</name>
    <dbReference type="NCBI Taxonomy" id="262698"/>
    <lineage>
        <taxon>Bacteria</taxon>
        <taxon>Pseudomonadati</taxon>
        <taxon>Pseudomonadota</taxon>
        <taxon>Alphaproteobacteria</taxon>
        <taxon>Hyphomicrobiales</taxon>
        <taxon>Brucellaceae</taxon>
        <taxon>Brucella/Ochrobactrum group</taxon>
        <taxon>Brucella</taxon>
    </lineage>
</organism>
<comment type="function">
    <text evidence="1">Catalyzes the hydrolysis of the adenine ring of phosphoribosyl-AMP.</text>
</comment>
<comment type="catalytic activity">
    <reaction evidence="1">
        <text>1-(5-phospho-beta-D-ribosyl)-5'-AMP + H2O = 1-(5-phospho-beta-D-ribosyl)-5-[(5-phospho-beta-D-ribosylamino)methylideneamino]imidazole-4-carboxamide</text>
        <dbReference type="Rhea" id="RHEA:20049"/>
        <dbReference type="ChEBI" id="CHEBI:15377"/>
        <dbReference type="ChEBI" id="CHEBI:58435"/>
        <dbReference type="ChEBI" id="CHEBI:59457"/>
        <dbReference type="EC" id="3.5.4.19"/>
    </reaction>
</comment>
<comment type="cofactor">
    <cofactor evidence="1">
        <name>Mg(2+)</name>
        <dbReference type="ChEBI" id="CHEBI:18420"/>
    </cofactor>
    <text evidence="1">Binds 1 Mg(2+) ion per subunit.</text>
</comment>
<comment type="cofactor">
    <cofactor evidence="1">
        <name>Zn(2+)</name>
        <dbReference type="ChEBI" id="CHEBI:29105"/>
    </cofactor>
    <text evidence="1">Binds 1 zinc ion per subunit.</text>
</comment>
<comment type="pathway">
    <text evidence="1">Amino-acid biosynthesis; L-histidine biosynthesis; L-histidine from 5-phospho-alpha-D-ribose 1-diphosphate: step 3/9.</text>
</comment>
<comment type="subunit">
    <text evidence="1">Homodimer.</text>
</comment>
<comment type="subcellular location">
    <subcellularLocation>
        <location evidence="1">Cytoplasm</location>
    </subcellularLocation>
</comment>
<comment type="similarity">
    <text evidence="1">Belongs to the PRA-CH family.</text>
</comment>
<dbReference type="EC" id="3.5.4.19" evidence="1"/>
<dbReference type="EMBL" id="AE017223">
    <property type="protein sequence ID" value="AAX74424.1"/>
    <property type="molecule type" value="Genomic_DNA"/>
</dbReference>
<dbReference type="RefSeq" id="WP_002966830.1">
    <property type="nucleotide sequence ID" value="NC_006932.1"/>
</dbReference>
<dbReference type="SMR" id="Q57D60"/>
<dbReference type="EnsemblBacteria" id="AAX74424">
    <property type="protein sequence ID" value="AAX74424"/>
    <property type="gene ID" value="BruAb1_1081"/>
</dbReference>
<dbReference type="GeneID" id="97533666"/>
<dbReference type="KEGG" id="bmb:BruAb1_1081"/>
<dbReference type="HOGENOM" id="CLU_048577_5_0_5"/>
<dbReference type="UniPathway" id="UPA00031">
    <property type="reaction ID" value="UER00008"/>
</dbReference>
<dbReference type="Proteomes" id="UP000000540">
    <property type="component" value="Chromosome I"/>
</dbReference>
<dbReference type="GO" id="GO:0005737">
    <property type="term" value="C:cytoplasm"/>
    <property type="evidence" value="ECO:0007669"/>
    <property type="project" value="UniProtKB-SubCell"/>
</dbReference>
<dbReference type="GO" id="GO:0000287">
    <property type="term" value="F:magnesium ion binding"/>
    <property type="evidence" value="ECO:0007669"/>
    <property type="project" value="UniProtKB-UniRule"/>
</dbReference>
<dbReference type="GO" id="GO:0004635">
    <property type="term" value="F:phosphoribosyl-AMP cyclohydrolase activity"/>
    <property type="evidence" value="ECO:0007669"/>
    <property type="project" value="UniProtKB-UniRule"/>
</dbReference>
<dbReference type="GO" id="GO:0008270">
    <property type="term" value="F:zinc ion binding"/>
    <property type="evidence" value="ECO:0007669"/>
    <property type="project" value="UniProtKB-UniRule"/>
</dbReference>
<dbReference type="GO" id="GO:0000105">
    <property type="term" value="P:L-histidine biosynthetic process"/>
    <property type="evidence" value="ECO:0007669"/>
    <property type="project" value="UniProtKB-UniRule"/>
</dbReference>
<dbReference type="FunFam" id="3.10.20.810:FF:000001">
    <property type="entry name" value="Histidine biosynthesis bifunctional protein HisIE"/>
    <property type="match status" value="1"/>
</dbReference>
<dbReference type="Gene3D" id="4.10.80.70">
    <property type="match status" value="1"/>
</dbReference>
<dbReference type="Gene3D" id="3.10.20.810">
    <property type="entry name" value="Phosphoribosyl-AMP cyclohydrolase"/>
    <property type="match status" value="1"/>
</dbReference>
<dbReference type="HAMAP" id="MF_01021">
    <property type="entry name" value="HisI"/>
    <property type="match status" value="1"/>
</dbReference>
<dbReference type="InterPro" id="IPR026660">
    <property type="entry name" value="PRA-CH"/>
</dbReference>
<dbReference type="InterPro" id="IPR002496">
    <property type="entry name" value="PRib_AMP_CycHydrolase_dom"/>
</dbReference>
<dbReference type="InterPro" id="IPR038019">
    <property type="entry name" value="PRib_AMP_CycHydrolase_sf"/>
</dbReference>
<dbReference type="NCBIfam" id="NF000768">
    <property type="entry name" value="PRK00051.1"/>
    <property type="match status" value="1"/>
</dbReference>
<dbReference type="PANTHER" id="PTHR42945">
    <property type="entry name" value="HISTIDINE BIOSYNTHESIS BIFUNCTIONAL PROTEIN"/>
    <property type="match status" value="1"/>
</dbReference>
<dbReference type="PANTHER" id="PTHR42945:SF1">
    <property type="entry name" value="HISTIDINE BIOSYNTHESIS BIFUNCTIONAL PROTEIN HIS7"/>
    <property type="match status" value="1"/>
</dbReference>
<dbReference type="Pfam" id="PF01502">
    <property type="entry name" value="PRA-CH"/>
    <property type="match status" value="1"/>
</dbReference>
<dbReference type="SUPFAM" id="SSF141734">
    <property type="entry name" value="HisI-like"/>
    <property type="match status" value="1"/>
</dbReference>
<name>HIS3_BRUAB</name>
<accession>Q57D60</accession>